<evidence type="ECO:0000255" key="1">
    <source>
        <dbReference type="HAMAP-Rule" id="MF_01855"/>
    </source>
</evidence>
<reference key="1">
    <citation type="journal article" date="2006" name="Mol. Microbiol.">
        <title>Role of pathogenicity island-associated integrases in the genome plasticity of uropathogenic Escherichia coli strain 536.</title>
        <authorList>
            <person name="Hochhut B."/>
            <person name="Wilde C."/>
            <person name="Balling G."/>
            <person name="Middendorf B."/>
            <person name="Dobrindt U."/>
            <person name="Brzuszkiewicz E."/>
            <person name="Gottschalk G."/>
            <person name="Carniel E."/>
            <person name="Hacker J."/>
        </authorList>
    </citation>
    <scope>NUCLEOTIDE SEQUENCE [LARGE SCALE GENOMIC DNA]</scope>
    <source>
        <strain>536 / UPEC</strain>
    </source>
</reference>
<sequence>MKTLGEFIVEKQHEFSHATGELTALLSAIKLGAKIIHRDINKAGLVDILGASGAENVQGEVQQKLDLFANEKLKAALKARDIVAGIASEEEDEIVVFEGCEHAKYVVLMDPLDGSSNIDVNVSVGTIFSIYRRVTPVGTPVTEEDFLQPGNKQVAAGYVVYGSSTMLVYTTGCGVHAFTYDPSLGVFCLCQERMRFPEKGKTYSINEGNYIKFPNGVKKYIKFCQEEDKSTNRPYTSRYIGSLVADFHRNLLKGGIYLYPSTASHPDGKLRLLYECNPMAFLAEQAGGKASDGKERILDIIPETLHQRRSFFVGNDHMVEDVERFIREFPDA</sequence>
<comment type="catalytic activity">
    <reaction evidence="1">
        <text>beta-D-fructose 1,6-bisphosphate + H2O = beta-D-fructose 6-phosphate + phosphate</text>
        <dbReference type="Rhea" id="RHEA:11064"/>
        <dbReference type="ChEBI" id="CHEBI:15377"/>
        <dbReference type="ChEBI" id="CHEBI:32966"/>
        <dbReference type="ChEBI" id="CHEBI:43474"/>
        <dbReference type="ChEBI" id="CHEBI:57634"/>
        <dbReference type="EC" id="3.1.3.11"/>
    </reaction>
</comment>
<comment type="cofactor">
    <cofactor evidence="1">
        <name>Mg(2+)</name>
        <dbReference type="ChEBI" id="CHEBI:18420"/>
    </cofactor>
    <text evidence="1">Binds 2 magnesium ions per subunit.</text>
</comment>
<comment type="pathway">
    <text evidence="1">Carbohydrate biosynthesis; gluconeogenesis.</text>
</comment>
<comment type="subunit">
    <text evidence="1">Homotetramer.</text>
</comment>
<comment type="subcellular location">
    <subcellularLocation>
        <location evidence="1">Cytoplasm</location>
    </subcellularLocation>
</comment>
<comment type="similarity">
    <text evidence="1">Belongs to the FBPase class 1 family.</text>
</comment>
<name>F16PA_ECOL5</name>
<feature type="chain" id="PRO_0000364553" description="Fructose-1,6-bisphosphatase class 1">
    <location>
        <begin position="1"/>
        <end position="332"/>
    </location>
</feature>
<feature type="binding site" evidence="1">
    <location>
        <position position="89"/>
    </location>
    <ligand>
        <name>Mg(2+)</name>
        <dbReference type="ChEBI" id="CHEBI:18420"/>
        <label>1</label>
    </ligand>
</feature>
<feature type="binding site" evidence="1">
    <location>
        <position position="110"/>
    </location>
    <ligand>
        <name>Mg(2+)</name>
        <dbReference type="ChEBI" id="CHEBI:18420"/>
        <label>1</label>
    </ligand>
</feature>
<feature type="binding site" evidence="1">
    <location>
        <position position="110"/>
    </location>
    <ligand>
        <name>Mg(2+)</name>
        <dbReference type="ChEBI" id="CHEBI:18420"/>
        <label>2</label>
    </ligand>
</feature>
<feature type="binding site" evidence="1">
    <location>
        <position position="112"/>
    </location>
    <ligand>
        <name>Mg(2+)</name>
        <dbReference type="ChEBI" id="CHEBI:18420"/>
        <label>1</label>
    </ligand>
</feature>
<feature type="binding site" evidence="1">
    <location>
        <begin position="113"/>
        <end position="116"/>
    </location>
    <ligand>
        <name>substrate</name>
    </ligand>
</feature>
<feature type="binding site" evidence="1">
    <location>
        <position position="113"/>
    </location>
    <ligand>
        <name>Mg(2+)</name>
        <dbReference type="ChEBI" id="CHEBI:18420"/>
        <label>2</label>
    </ligand>
</feature>
<feature type="binding site" evidence="1">
    <location>
        <position position="206"/>
    </location>
    <ligand>
        <name>substrate</name>
    </ligand>
</feature>
<feature type="binding site" evidence="1">
    <location>
        <position position="239"/>
    </location>
    <ligand>
        <name>substrate</name>
    </ligand>
</feature>
<feature type="binding site" evidence="1">
    <location>
        <begin position="257"/>
        <end position="259"/>
    </location>
    <ligand>
        <name>substrate</name>
    </ligand>
</feature>
<feature type="binding site" evidence="1">
    <location>
        <position position="269"/>
    </location>
    <ligand>
        <name>substrate</name>
    </ligand>
</feature>
<feature type="binding site" evidence="1">
    <location>
        <position position="275"/>
    </location>
    <ligand>
        <name>Mg(2+)</name>
        <dbReference type="ChEBI" id="CHEBI:18420"/>
        <label>2</label>
    </ligand>
</feature>
<proteinExistence type="inferred from homology"/>
<protein>
    <recommendedName>
        <fullName evidence="1">Fructose-1,6-bisphosphatase class 1</fullName>
        <shortName evidence="1">FBPase class 1</shortName>
        <ecNumber evidence="1">3.1.3.11</ecNumber>
    </recommendedName>
    <alternativeName>
        <fullName evidence="1">D-fructose-1,6-bisphosphate 1-phosphohydrolase class 1</fullName>
    </alternativeName>
</protein>
<accession>Q0T9F7</accession>
<gene>
    <name evidence="1" type="primary">fbp</name>
    <name type="ordered locus">ECP_4481</name>
</gene>
<organism>
    <name type="scientific">Escherichia coli O6:K15:H31 (strain 536 / UPEC)</name>
    <dbReference type="NCBI Taxonomy" id="362663"/>
    <lineage>
        <taxon>Bacteria</taxon>
        <taxon>Pseudomonadati</taxon>
        <taxon>Pseudomonadota</taxon>
        <taxon>Gammaproteobacteria</taxon>
        <taxon>Enterobacterales</taxon>
        <taxon>Enterobacteriaceae</taxon>
        <taxon>Escherichia</taxon>
    </lineage>
</organism>
<keyword id="KW-0119">Carbohydrate metabolism</keyword>
<keyword id="KW-0963">Cytoplasm</keyword>
<keyword id="KW-0378">Hydrolase</keyword>
<keyword id="KW-0460">Magnesium</keyword>
<keyword id="KW-0479">Metal-binding</keyword>
<dbReference type="EC" id="3.1.3.11" evidence="1"/>
<dbReference type="EMBL" id="CP000247">
    <property type="protein sequence ID" value="ABG72422.1"/>
    <property type="molecule type" value="Genomic_DNA"/>
</dbReference>
<dbReference type="RefSeq" id="WP_000853753.1">
    <property type="nucleotide sequence ID" value="NC_008253.1"/>
</dbReference>
<dbReference type="SMR" id="Q0T9F7"/>
<dbReference type="GeneID" id="86861371"/>
<dbReference type="KEGG" id="ecp:ECP_4481"/>
<dbReference type="HOGENOM" id="CLU_039977_2_2_6"/>
<dbReference type="UniPathway" id="UPA00138"/>
<dbReference type="Proteomes" id="UP000009182">
    <property type="component" value="Chromosome"/>
</dbReference>
<dbReference type="GO" id="GO:0005829">
    <property type="term" value="C:cytosol"/>
    <property type="evidence" value="ECO:0007669"/>
    <property type="project" value="TreeGrafter"/>
</dbReference>
<dbReference type="GO" id="GO:0042132">
    <property type="term" value="F:fructose 1,6-bisphosphate 1-phosphatase activity"/>
    <property type="evidence" value="ECO:0007669"/>
    <property type="project" value="UniProtKB-UniRule"/>
</dbReference>
<dbReference type="GO" id="GO:0000287">
    <property type="term" value="F:magnesium ion binding"/>
    <property type="evidence" value="ECO:0007669"/>
    <property type="project" value="UniProtKB-UniRule"/>
</dbReference>
<dbReference type="GO" id="GO:0030388">
    <property type="term" value="P:fructose 1,6-bisphosphate metabolic process"/>
    <property type="evidence" value="ECO:0007669"/>
    <property type="project" value="TreeGrafter"/>
</dbReference>
<dbReference type="GO" id="GO:0006002">
    <property type="term" value="P:fructose 6-phosphate metabolic process"/>
    <property type="evidence" value="ECO:0007669"/>
    <property type="project" value="TreeGrafter"/>
</dbReference>
<dbReference type="GO" id="GO:0006000">
    <property type="term" value="P:fructose metabolic process"/>
    <property type="evidence" value="ECO:0007669"/>
    <property type="project" value="TreeGrafter"/>
</dbReference>
<dbReference type="GO" id="GO:0006094">
    <property type="term" value="P:gluconeogenesis"/>
    <property type="evidence" value="ECO:0007669"/>
    <property type="project" value="UniProtKB-UniRule"/>
</dbReference>
<dbReference type="GO" id="GO:0005986">
    <property type="term" value="P:sucrose biosynthetic process"/>
    <property type="evidence" value="ECO:0007669"/>
    <property type="project" value="TreeGrafter"/>
</dbReference>
<dbReference type="CDD" id="cd00354">
    <property type="entry name" value="FBPase"/>
    <property type="match status" value="1"/>
</dbReference>
<dbReference type="FunFam" id="3.30.540.10:FF:000002">
    <property type="entry name" value="Fructose-1,6-bisphosphatase class 1"/>
    <property type="match status" value="1"/>
</dbReference>
<dbReference type="FunFam" id="3.40.190.80:FF:000001">
    <property type="entry name" value="Fructose-1,6-bisphosphatase class 1"/>
    <property type="match status" value="1"/>
</dbReference>
<dbReference type="Gene3D" id="3.40.190.80">
    <property type="match status" value="1"/>
</dbReference>
<dbReference type="Gene3D" id="3.30.540.10">
    <property type="entry name" value="Fructose-1,6-Bisphosphatase, subunit A, domain 1"/>
    <property type="match status" value="1"/>
</dbReference>
<dbReference type="HAMAP" id="MF_01855">
    <property type="entry name" value="FBPase_class1"/>
    <property type="match status" value="1"/>
</dbReference>
<dbReference type="InterPro" id="IPR044015">
    <property type="entry name" value="FBPase_C_dom"/>
</dbReference>
<dbReference type="InterPro" id="IPR000146">
    <property type="entry name" value="FBPase_class-1"/>
</dbReference>
<dbReference type="InterPro" id="IPR033391">
    <property type="entry name" value="FBPase_N"/>
</dbReference>
<dbReference type="InterPro" id="IPR028343">
    <property type="entry name" value="FBPtase"/>
</dbReference>
<dbReference type="InterPro" id="IPR020548">
    <property type="entry name" value="Fructose_bisphosphatase_AS"/>
</dbReference>
<dbReference type="NCBIfam" id="NF006778">
    <property type="entry name" value="PRK09293.1-1"/>
    <property type="match status" value="1"/>
</dbReference>
<dbReference type="NCBIfam" id="NF006779">
    <property type="entry name" value="PRK09293.1-3"/>
    <property type="match status" value="1"/>
</dbReference>
<dbReference type="PANTHER" id="PTHR11556">
    <property type="entry name" value="FRUCTOSE-1,6-BISPHOSPHATASE-RELATED"/>
    <property type="match status" value="1"/>
</dbReference>
<dbReference type="PANTHER" id="PTHR11556:SF35">
    <property type="entry name" value="SEDOHEPTULOSE-1,7-BISPHOSPHATASE, CHLOROPLASTIC"/>
    <property type="match status" value="1"/>
</dbReference>
<dbReference type="Pfam" id="PF00316">
    <property type="entry name" value="FBPase"/>
    <property type="match status" value="1"/>
</dbReference>
<dbReference type="Pfam" id="PF18913">
    <property type="entry name" value="FBPase_C"/>
    <property type="match status" value="1"/>
</dbReference>
<dbReference type="PIRSF" id="PIRSF500210">
    <property type="entry name" value="FBPtase"/>
    <property type="match status" value="1"/>
</dbReference>
<dbReference type="PIRSF" id="PIRSF000904">
    <property type="entry name" value="FBPtase_SBPase"/>
    <property type="match status" value="1"/>
</dbReference>
<dbReference type="PRINTS" id="PR00115">
    <property type="entry name" value="F16BPHPHTASE"/>
</dbReference>
<dbReference type="SUPFAM" id="SSF56655">
    <property type="entry name" value="Carbohydrate phosphatase"/>
    <property type="match status" value="1"/>
</dbReference>
<dbReference type="PROSITE" id="PS00124">
    <property type="entry name" value="FBPASE"/>
    <property type="match status" value="1"/>
</dbReference>